<evidence type="ECO:0000250" key="1"/>
<evidence type="ECO:0000305" key="2"/>
<sequence>MARYRCCRSRSRSRCRPRRRRCRRRRRRCCRRRRRVCCRRYSARCRRRR</sequence>
<dbReference type="EMBL" id="AF435931">
    <property type="protein sequence ID" value="AAL35565.1"/>
    <property type="molecule type" value="Genomic_DNA"/>
</dbReference>
<dbReference type="GO" id="GO:0000786">
    <property type="term" value="C:nucleosome"/>
    <property type="evidence" value="ECO:0007669"/>
    <property type="project" value="UniProtKB-KW"/>
</dbReference>
<dbReference type="GO" id="GO:0005634">
    <property type="term" value="C:nucleus"/>
    <property type="evidence" value="ECO:0007669"/>
    <property type="project" value="UniProtKB-SubCell"/>
</dbReference>
<dbReference type="GO" id="GO:0003677">
    <property type="term" value="F:DNA binding"/>
    <property type="evidence" value="ECO:0007669"/>
    <property type="project" value="UniProtKB-KW"/>
</dbReference>
<dbReference type="GO" id="GO:0030261">
    <property type="term" value="P:chromosome condensation"/>
    <property type="evidence" value="ECO:0007669"/>
    <property type="project" value="UniProtKB-KW"/>
</dbReference>
<dbReference type="GO" id="GO:0035092">
    <property type="term" value="P:sperm DNA condensation"/>
    <property type="evidence" value="ECO:0007669"/>
    <property type="project" value="InterPro"/>
</dbReference>
<dbReference type="InterPro" id="IPR000221">
    <property type="entry name" value="Protamine_P1"/>
</dbReference>
<dbReference type="Pfam" id="PF00260">
    <property type="entry name" value="Protamine_P1"/>
    <property type="match status" value="1"/>
</dbReference>
<dbReference type="PROSITE" id="PS00048">
    <property type="entry name" value="PROTAMINE_P1"/>
    <property type="match status" value="1"/>
</dbReference>
<protein>
    <recommendedName>
        <fullName>Sperm protamine P1</fullName>
    </recommendedName>
</protein>
<keyword id="KW-0158">Chromosome</keyword>
<keyword id="KW-0217">Developmental protein</keyword>
<keyword id="KW-0221">Differentiation</keyword>
<keyword id="KW-0226">DNA condensation</keyword>
<keyword id="KW-0238">DNA-binding</keyword>
<keyword id="KW-0544">Nucleosome core</keyword>
<keyword id="KW-0539">Nucleus</keyword>
<keyword id="KW-0744">Spermatogenesis</keyword>
<comment type="function">
    <text evidence="1">Protamines substitute for histones in the chromatin of sperm during the haploid phase of spermatogenesis. They compact sperm DNA into a highly condensed, stable and inactive complex (By similarity).</text>
</comment>
<comment type="subcellular location">
    <subcellularLocation>
        <location evidence="1">Nucleus</location>
    </subcellularLocation>
    <subcellularLocation>
        <location evidence="1">Chromosome</location>
    </subcellularLocation>
</comment>
<comment type="tissue specificity">
    <text>Testis.</text>
</comment>
<comment type="similarity">
    <text evidence="2">Belongs to the protamine P1 family.</text>
</comment>
<proteinExistence type="evidence at transcript level"/>
<reference key="1">
    <citation type="journal article" date="2002" name="Mol. Phylogenet. Evol.">
        <title>Characterization and phylogenetic utility of the mammalian protamine P1 gene.</title>
        <authorList>
            <person name="Van Den Bussche R.A."/>
            <person name="Hoofer S.R."/>
            <person name="Hansen E.W."/>
        </authorList>
    </citation>
    <scope>NUCLEOTIDE SEQUENCE [GENOMIC DNA]</scope>
</reference>
<feature type="chain" id="PRO_0000191551" description="Sperm protamine P1">
    <location>
        <begin position="1"/>
        <end position="49"/>
    </location>
</feature>
<organism>
    <name type="scientific">Rhinopoma hardwickii</name>
    <name type="common">Lesser mouse-tailed bat</name>
    <dbReference type="NCBI Taxonomy" id="124756"/>
    <lineage>
        <taxon>Eukaryota</taxon>
        <taxon>Metazoa</taxon>
        <taxon>Chordata</taxon>
        <taxon>Craniata</taxon>
        <taxon>Vertebrata</taxon>
        <taxon>Euteleostomi</taxon>
        <taxon>Mammalia</taxon>
        <taxon>Eutheria</taxon>
        <taxon>Laurasiatheria</taxon>
        <taxon>Chiroptera</taxon>
        <taxon>Yinpterochiroptera</taxon>
        <taxon>Rhinolophoidea</taxon>
        <taxon>Rhinopomatidae</taxon>
        <taxon>Rhinopoma</taxon>
    </lineage>
</organism>
<accession>Q8WNZ6</accession>
<gene>
    <name type="primary">PRM1</name>
</gene>
<name>HSP1_RHIHA</name>